<sequence>MTTTLFSSRIIQSALDFDVYKVNMMSAVAALYPDAMVSYKFIVRSEEDLSELLPEVKAEVLKLQDVRFTEDEIAYMKRVAPYLKPEFVEALRHFRFNPQSDVSFHNKTMSDGSSQLRITINGLWKETILYETIIMSIVSEVRSRQRWSDIPFEQFQTVLEDKVRYLKAELERRNITNFKFADMSTRRRFSFQAQRTMLEYLSKELPQCLTGTSNYHLARELDLTPIGTVAHEWFMGHQALVNVRDSQKIALQRWQKMFNGALGIALTDTIGIDAFLKDFDEELSHAYVGVRHDSGCPFTWGEKMIAHYESLGIDPMTKTLVFTDGLNFEQALDICEHFQGRVQVSFGIGTSLANDMGNYVNDQGEAYQPLSIVIKMVTCNGSPVAKISDEPEKAMCEDIFFLMNLKRRFEQPLDLNECRKLIDRLESEGQNYLIDA</sequence>
<gene>
    <name evidence="1" type="primary">pncB</name>
    <name type="ordered locus">VPA0309</name>
</gene>
<feature type="chain" id="PRO_0000205848" description="Nicotinate phosphoribosyltransferase">
    <location>
        <begin position="1"/>
        <end position="436"/>
    </location>
</feature>
<feature type="modified residue" description="Phosphohistidine; by autocatalysis" evidence="1">
    <location>
        <position position="231"/>
    </location>
</feature>
<keyword id="KW-0436">Ligase</keyword>
<keyword id="KW-0597">Phosphoprotein</keyword>
<keyword id="KW-0662">Pyridine nucleotide biosynthesis</keyword>
<name>PNCB_VIBPA</name>
<evidence type="ECO:0000255" key="1">
    <source>
        <dbReference type="HAMAP-Rule" id="MF_00570"/>
    </source>
</evidence>
<proteinExistence type="inferred from homology"/>
<organism>
    <name type="scientific">Vibrio parahaemolyticus serotype O3:K6 (strain RIMD 2210633)</name>
    <dbReference type="NCBI Taxonomy" id="223926"/>
    <lineage>
        <taxon>Bacteria</taxon>
        <taxon>Pseudomonadati</taxon>
        <taxon>Pseudomonadota</taxon>
        <taxon>Gammaproteobacteria</taxon>
        <taxon>Vibrionales</taxon>
        <taxon>Vibrionaceae</taxon>
        <taxon>Vibrio</taxon>
    </lineage>
</organism>
<comment type="function">
    <text evidence="1">Catalyzes the synthesis of beta-nicotinate D-ribonucleotide from nicotinate and 5-phospho-D-ribose 1-phosphate at the expense of ATP.</text>
</comment>
<comment type="catalytic activity">
    <reaction evidence="1">
        <text>nicotinate + 5-phospho-alpha-D-ribose 1-diphosphate + ATP + H2O = nicotinate beta-D-ribonucleotide + ADP + phosphate + diphosphate</text>
        <dbReference type="Rhea" id="RHEA:36163"/>
        <dbReference type="ChEBI" id="CHEBI:15377"/>
        <dbReference type="ChEBI" id="CHEBI:30616"/>
        <dbReference type="ChEBI" id="CHEBI:32544"/>
        <dbReference type="ChEBI" id="CHEBI:33019"/>
        <dbReference type="ChEBI" id="CHEBI:43474"/>
        <dbReference type="ChEBI" id="CHEBI:57502"/>
        <dbReference type="ChEBI" id="CHEBI:58017"/>
        <dbReference type="ChEBI" id="CHEBI:456216"/>
        <dbReference type="EC" id="6.3.4.21"/>
    </reaction>
</comment>
<comment type="pathway">
    <text evidence="1">Cofactor biosynthesis; NAD(+) biosynthesis; nicotinate D-ribonucleotide from nicotinate: step 1/1.</text>
</comment>
<comment type="PTM">
    <text evidence="1">Transiently phosphorylated on a His residue during the reaction cycle. Phosphorylation strongly increases the affinity for substrates and increases the rate of nicotinate D-ribonucleotide production. Dephosphorylation regenerates the low-affinity form of the enzyme, leading to product release.</text>
</comment>
<comment type="similarity">
    <text evidence="1">Belongs to the NAPRTase family.</text>
</comment>
<protein>
    <recommendedName>
        <fullName evidence="1">Nicotinate phosphoribosyltransferase</fullName>
        <shortName evidence="1">NAPRTase</shortName>
        <ecNumber evidence="1">6.3.4.21</ecNumber>
    </recommendedName>
</protein>
<reference key="1">
    <citation type="journal article" date="2003" name="Lancet">
        <title>Genome sequence of Vibrio parahaemolyticus: a pathogenic mechanism distinct from that of V. cholerae.</title>
        <authorList>
            <person name="Makino K."/>
            <person name="Oshima K."/>
            <person name="Kurokawa K."/>
            <person name="Yokoyama K."/>
            <person name="Uda T."/>
            <person name="Tagomori K."/>
            <person name="Iijima Y."/>
            <person name="Najima M."/>
            <person name="Nakano M."/>
            <person name="Yamashita A."/>
            <person name="Kubota Y."/>
            <person name="Kimura S."/>
            <person name="Yasunaga T."/>
            <person name="Honda T."/>
            <person name="Shinagawa H."/>
            <person name="Hattori M."/>
            <person name="Iida T."/>
        </authorList>
    </citation>
    <scope>NUCLEOTIDE SEQUENCE [LARGE SCALE GENOMIC DNA]</scope>
    <source>
        <strain>RIMD 2210633</strain>
    </source>
</reference>
<accession>Q87JE4</accession>
<dbReference type="EC" id="6.3.4.21" evidence="1"/>
<dbReference type="EMBL" id="BA000032">
    <property type="protein sequence ID" value="BAC61652.1"/>
    <property type="molecule type" value="Genomic_DNA"/>
</dbReference>
<dbReference type="RefSeq" id="NP_799819.1">
    <property type="nucleotide sequence ID" value="NC_004605.1"/>
</dbReference>
<dbReference type="RefSeq" id="WP_005479835.1">
    <property type="nucleotide sequence ID" value="NC_004605.1"/>
</dbReference>
<dbReference type="SMR" id="Q87JE4"/>
<dbReference type="GeneID" id="1190997"/>
<dbReference type="KEGG" id="vpa:VPA0309"/>
<dbReference type="PATRIC" id="fig|223926.6.peg.3261"/>
<dbReference type="eggNOG" id="COG1488">
    <property type="taxonomic scope" value="Bacteria"/>
</dbReference>
<dbReference type="HOGENOM" id="CLU_030991_1_0_6"/>
<dbReference type="UniPathway" id="UPA00253">
    <property type="reaction ID" value="UER00457"/>
</dbReference>
<dbReference type="Proteomes" id="UP000002493">
    <property type="component" value="Chromosome 2"/>
</dbReference>
<dbReference type="GO" id="GO:0005829">
    <property type="term" value="C:cytosol"/>
    <property type="evidence" value="ECO:0007669"/>
    <property type="project" value="TreeGrafter"/>
</dbReference>
<dbReference type="GO" id="GO:0004516">
    <property type="term" value="F:nicotinate phosphoribosyltransferase activity"/>
    <property type="evidence" value="ECO:0007669"/>
    <property type="project" value="UniProtKB-UniRule"/>
</dbReference>
<dbReference type="GO" id="GO:0034355">
    <property type="term" value="P:NAD biosynthetic process via the salvage pathway"/>
    <property type="evidence" value="ECO:0007669"/>
    <property type="project" value="TreeGrafter"/>
</dbReference>
<dbReference type="CDD" id="cd01401">
    <property type="entry name" value="PncB_like"/>
    <property type="match status" value="1"/>
</dbReference>
<dbReference type="Gene3D" id="3.20.140.10">
    <property type="entry name" value="nicotinate phosphoribosyltransferase"/>
    <property type="match status" value="1"/>
</dbReference>
<dbReference type="HAMAP" id="MF_00570">
    <property type="entry name" value="NAPRTase"/>
    <property type="match status" value="1"/>
</dbReference>
<dbReference type="InterPro" id="IPR041525">
    <property type="entry name" value="N/Namide_PRibTrfase"/>
</dbReference>
<dbReference type="InterPro" id="IPR040727">
    <property type="entry name" value="NAPRTase_N"/>
</dbReference>
<dbReference type="InterPro" id="IPR006406">
    <property type="entry name" value="Nic_PRibTrfase"/>
</dbReference>
<dbReference type="InterPro" id="IPR007229">
    <property type="entry name" value="Nic_PRibTrfase-Fam"/>
</dbReference>
<dbReference type="InterPro" id="IPR036068">
    <property type="entry name" value="Nicotinate_pribotase-like_C"/>
</dbReference>
<dbReference type="NCBIfam" id="TIGR01514">
    <property type="entry name" value="NAPRTase"/>
    <property type="match status" value="1"/>
</dbReference>
<dbReference type="NCBIfam" id="NF003704">
    <property type="entry name" value="PRK05321.1"/>
    <property type="match status" value="1"/>
</dbReference>
<dbReference type="PANTHER" id="PTHR11098">
    <property type="entry name" value="NICOTINATE PHOSPHORIBOSYLTRANSFERASE"/>
    <property type="match status" value="1"/>
</dbReference>
<dbReference type="PANTHER" id="PTHR11098:SF1">
    <property type="entry name" value="NICOTINATE PHOSPHORIBOSYLTRANSFERASE"/>
    <property type="match status" value="1"/>
</dbReference>
<dbReference type="Pfam" id="PF04095">
    <property type="entry name" value="NAPRTase"/>
    <property type="match status" value="1"/>
</dbReference>
<dbReference type="Pfam" id="PF17767">
    <property type="entry name" value="NAPRTase_N"/>
    <property type="match status" value="1"/>
</dbReference>
<dbReference type="PIRSF" id="PIRSF000484">
    <property type="entry name" value="NAPRT"/>
    <property type="match status" value="1"/>
</dbReference>
<dbReference type="SUPFAM" id="SSF51690">
    <property type="entry name" value="Nicotinate/Quinolinate PRTase C-terminal domain-like"/>
    <property type="match status" value="1"/>
</dbReference>
<dbReference type="SUPFAM" id="SSF54675">
    <property type="entry name" value="Nicotinate/Quinolinate PRTase N-terminal domain-like"/>
    <property type="match status" value="1"/>
</dbReference>